<keyword id="KW-0004">4Fe-4S</keyword>
<keyword id="KW-0408">Iron</keyword>
<keyword id="KW-0411">Iron-sulfur</keyword>
<keyword id="KW-0479">Metal-binding</keyword>
<gene>
    <name evidence="1" type="primary">nfuA</name>
    <name type="ordered locus">VC0395_A2293</name>
    <name type="ordered locus">VC395_2832</name>
</gene>
<sequence>MSNPITITESAQSHFAKLLAQQPEGTNIRVFVVNPGTQNAECGVSYCPPEAVEATDTEYPFSGFSAYVDGLSLPFLEEAVIDFVTDKMGSQLTLKAPNAKMRKVSDDASLMERVEYALQTQVNPQLAGHGGHVRLISISDDGVALVQFGGGCNGCSMVDVTLKEGIEKELLAQFAGELTAVRDSTEHDRGEHSYY</sequence>
<organism>
    <name type="scientific">Vibrio cholerae serotype O1 (strain ATCC 39541 / Classical Ogawa 395 / O395)</name>
    <dbReference type="NCBI Taxonomy" id="345073"/>
    <lineage>
        <taxon>Bacteria</taxon>
        <taxon>Pseudomonadati</taxon>
        <taxon>Pseudomonadota</taxon>
        <taxon>Gammaproteobacteria</taxon>
        <taxon>Vibrionales</taxon>
        <taxon>Vibrionaceae</taxon>
        <taxon>Vibrio</taxon>
    </lineage>
</organism>
<evidence type="ECO:0000255" key="1">
    <source>
        <dbReference type="HAMAP-Rule" id="MF_01637"/>
    </source>
</evidence>
<protein>
    <recommendedName>
        <fullName evidence="1">Fe/S biogenesis protein NfuA</fullName>
    </recommendedName>
</protein>
<comment type="function">
    <text evidence="1">Involved in iron-sulfur cluster biogenesis. Binds a 4Fe-4S cluster, can transfer this cluster to apoproteins, and thereby intervenes in the maturation of Fe/S proteins. Could also act as a scaffold/chaperone for damaged Fe/S proteins.</text>
</comment>
<comment type="cofactor">
    <cofactor evidence="1">
        <name>[4Fe-4S] cluster</name>
        <dbReference type="ChEBI" id="CHEBI:49883"/>
    </cofactor>
    <text evidence="1">Binds 1 [4Fe-4S] cluster per subunit. The cluster is presumably bound at the interface of two monomers.</text>
</comment>
<comment type="subunit">
    <text evidence="1">Homodimer.</text>
</comment>
<comment type="similarity">
    <text evidence="1">Belongs to the NfuA family.</text>
</comment>
<dbReference type="EMBL" id="CP000627">
    <property type="protein sequence ID" value="ABQ20991.1"/>
    <property type="molecule type" value="Genomic_DNA"/>
</dbReference>
<dbReference type="EMBL" id="CP001235">
    <property type="protein sequence ID" value="ACP10816.1"/>
    <property type="molecule type" value="Genomic_DNA"/>
</dbReference>
<dbReference type="RefSeq" id="WP_000070180.1">
    <property type="nucleotide sequence ID" value="NZ_JAACZH010000007.1"/>
</dbReference>
<dbReference type="SMR" id="A5F4R9"/>
<dbReference type="KEGG" id="vco:VC0395_A2293"/>
<dbReference type="KEGG" id="vcr:VC395_2832"/>
<dbReference type="PATRIC" id="fig|345073.21.peg.2731"/>
<dbReference type="eggNOG" id="COG0316">
    <property type="taxonomic scope" value="Bacteria"/>
</dbReference>
<dbReference type="eggNOG" id="COG0694">
    <property type="taxonomic scope" value="Bacteria"/>
</dbReference>
<dbReference type="HOGENOM" id="CLU_094569_0_0_6"/>
<dbReference type="OrthoDB" id="9785450at2"/>
<dbReference type="Proteomes" id="UP000000249">
    <property type="component" value="Chromosome 2"/>
</dbReference>
<dbReference type="GO" id="GO:0051539">
    <property type="term" value="F:4 iron, 4 sulfur cluster binding"/>
    <property type="evidence" value="ECO:0007669"/>
    <property type="project" value="UniProtKB-UniRule"/>
</dbReference>
<dbReference type="GO" id="GO:0005506">
    <property type="term" value="F:iron ion binding"/>
    <property type="evidence" value="ECO:0007669"/>
    <property type="project" value="InterPro"/>
</dbReference>
<dbReference type="GO" id="GO:0016226">
    <property type="term" value="P:iron-sulfur cluster assembly"/>
    <property type="evidence" value="ECO:0007669"/>
    <property type="project" value="UniProtKB-UniRule"/>
</dbReference>
<dbReference type="GO" id="GO:0051604">
    <property type="term" value="P:protein maturation"/>
    <property type="evidence" value="ECO:0007669"/>
    <property type="project" value="UniProtKB-UniRule"/>
</dbReference>
<dbReference type="Gene3D" id="3.30.300.130">
    <property type="entry name" value="Fe-S cluster assembly (FSCA)"/>
    <property type="match status" value="1"/>
</dbReference>
<dbReference type="Gene3D" id="2.60.300.12">
    <property type="entry name" value="HesB-like domain"/>
    <property type="match status" value="1"/>
</dbReference>
<dbReference type="HAMAP" id="MF_01637">
    <property type="entry name" value="Fe_S_biogen_NfuA"/>
    <property type="match status" value="1"/>
</dbReference>
<dbReference type="InterPro" id="IPR017726">
    <property type="entry name" value="Fe/S_biogenesis_protein_NfuA"/>
</dbReference>
<dbReference type="InterPro" id="IPR000361">
    <property type="entry name" value="FeS_biogenesis"/>
</dbReference>
<dbReference type="InterPro" id="IPR034904">
    <property type="entry name" value="FSCA_dom_sf"/>
</dbReference>
<dbReference type="InterPro" id="IPR035903">
    <property type="entry name" value="HesB-like_dom_sf"/>
</dbReference>
<dbReference type="InterPro" id="IPR001075">
    <property type="entry name" value="NIF_FeS_clus_asmbl_NifU_C"/>
</dbReference>
<dbReference type="NCBIfam" id="NF008392">
    <property type="entry name" value="PRK11190.1"/>
    <property type="match status" value="1"/>
</dbReference>
<dbReference type="NCBIfam" id="TIGR03341">
    <property type="entry name" value="YhgI_GntY"/>
    <property type="match status" value="1"/>
</dbReference>
<dbReference type="PANTHER" id="PTHR11178:SF51">
    <property type="entry name" value="FE_S BIOGENESIS PROTEIN NFUA"/>
    <property type="match status" value="1"/>
</dbReference>
<dbReference type="PANTHER" id="PTHR11178">
    <property type="entry name" value="IRON-SULFUR CLUSTER SCAFFOLD PROTEIN NFU-RELATED"/>
    <property type="match status" value="1"/>
</dbReference>
<dbReference type="Pfam" id="PF01521">
    <property type="entry name" value="Fe-S_biosyn"/>
    <property type="match status" value="1"/>
</dbReference>
<dbReference type="Pfam" id="PF01106">
    <property type="entry name" value="NifU"/>
    <property type="match status" value="1"/>
</dbReference>
<dbReference type="SUPFAM" id="SSF117916">
    <property type="entry name" value="Fe-S cluster assembly (FSCA) domain-like"/>
    <property type="match status" value="1"/>
</dbReference>
<dbReference type="SUPFAM" id="SSF89360">
    <property type="entry name" value="HesB-like domain"/>
    <property type="match status" value="1"/>
</dbReference>
<accession>A5F4R9</accession>
<accession>C3LY95</accession>
<proteinExistence type="inferred from homology"/>
<feature type="chain" id="PRO_1000073656" description="Fe/S biogenesis protein NfuA">
    <location>
        <begin position="1"/>
        <end position="195"/>
    </location>
</feature>
<feature type="binding site" evidence="1">
    <location>
        <position position="152"/>
    </location>
    <ligand>
        <name>[4Fe-4S] cluster</name>
        <dbReference type="ChEBI" id="CHEBI:49883"/>
    </ligand>
</feature>
<feature type="binding site" evidence="1">
    <location>
        <position position="155"/>
    </location>
    <ligand>
        <name>[4Fe-4S] cluster</name>
        <dbReference type="ChEBI" id="CHEBI:49883"/>
    </ligand>
</feature>
<reference key="1">
    <citation type="submission" date="2007-03" db="EMBL/GenBank/DDBJ databases">
        <authorList>
            <person name="Heidelberg J."/>
        </authorList>
    </citation>
    <scope>NUCLEOTIDE SEQUENCE [LARGE SCALE GENOMIC DNA]</scope>
    <source>
        <strain>ATCC 39541 / Classical Ogawa 395 / O395</strain>
    </source>
</reference>
<reference key="2">
    <citation type="journal article" date="2008" name="PLoS ONE">
        <title>A recalibrated molecular clock and independent origins for the cholera pandemic clones.</title>
        <authorList>
            <person name="Feng L."/>
            <person name="Reeves P.R."/>
            <person name="Lan R."/>
            <person name="Ren Y."/>
            <person name="Gao C."/>
            <person name="Zhou Z."/>
            <person name="Ren Y."/>
            <person name="Cheng J."/>
            <person name="Wang W."/>
            <person name="Wang J."/>
            <person name="Qian W."/>
            <person name="Li D."/>
            <person name="Wang L."/>
        </authorList>
    </citation>
    <scope>NUCLEOTIDE SEQUENCE [LARGE SCALE GENOMIC DNA]</scope>
    <source>
        <strain>ATCC 39541 / Classical Ogawa 395 / O395</strain>
    </source>
</reference>
<name>NFUA_VIBC3</name>